<evidence type="ECO:0000250" key="1">
    <source>
        <dbReference type="UniProtKB" id="F9VNG5"/>
    </source>
</evidence>
<evidence type="ECO:0000250" key="2">
    <source>
        <dbReference type="UniProtKB" id="O58802"/>
    </source>
</evidence>
<evidence type="ECO:0000250" key="3">
    <source>
        <dbReference type="UniProtKB" id="P31116"/>
    </source>
</evidence>
<evidence type="ECO:0000255" key="4"/>
<evidence type="ECO:0000255" key="5">
    <source>
        <dbReference type="PROSITE-ProRule" id="PRU01007"/>
    </source>
</evidence>
<evidence type="ECO:0000305" key="6"/>
<feature type="chain" id="PRO_0000066696" description="Homoserine dehydrogenase">
    <location>
        <begin position="1"/>
        <end position="428"/>
    </location>
</feature>
<feature type="domain" description="ACT" evidence="5">
    <location>
        <begin position="351"/>
        <end position="425"/>
    </location>
</feature>
<feature type="active site" description="Proton donor" evidence="4">
    <location>
        <position position="206"/>
    </location>
</feature>
<feature type="binding site" evidence="2">
    <location>
        <position position="10"/>
    </location>
    <ligand>
        <name>NADPH</name>
        <dbReference type="ChEBI" id="CHEBI:57783"/>
    </ligand>
</feature>
<feature type="binding site" evidence="2">
    <location>
        <position position="12"/>
    </location>
    <ligand>
        <name>NADPH</name>
        <dbReference type="ChEBI" id="CHEBI:57783"/>
    </ligand>
</feature>
<feature type="binding site" evidence="3">
    <location>
        <position position="13"/>
    </location>
    <ligand>
        <name>NAD(+)</name>
        <dbReference type="ChEBI" id="CHEBI:57540"/>
    </ligand>
</feature>
<feature type="binding site" evidence="1">
    <location>
        <position position="13"/>
    </location>
    <ligand>
        <name>NADP(+)</name>
        <dbReference type="ChEBI" id="CHEBI:58349"/>
    </ligand>
</feature>
<feature type="binding site" evidence="2">
    <location>
        <position position="13"/>
    </location>
    <ligand>
        <name>NADPH</name>
        <dbReference type="ChEBI" id="CHEBI:57783"/>
    </ligand>
</feature>
<feature type="binding site" evidence="1">
    <location>
        <position position="44"/>
    </location>
    <ligand>
        <name>NADP(+)</name>
        <dbReference type="ChEBI" id="CHEBI:58349"/>
    </ligand>
</feature>
<feature type="binding site" evidence="2">
    <location>
        <position position="44"/>
    </location>
    <ligand>
        <name>NADPH</name>
        <dbReference type="ChEBI" id="CHEBI:57783"/>
    </ligand>
</feature>
<feature type="binding site" evidence="1">
    <location>
        <position position="106"/>
    </location>
    <ligand>
        <name>NADP(+)</name>
        <dbReference type="ChEBI" id="CHEBI:58349"/>
    </ligand>
</feature>
<feature type="binding site" evidence="2">
    <location>
        <position position="106"/>
    </location>
    <ligand>
        <name>NADPH</name>
        <dbReference type="ChEBI" id="CHEBI:57783"/>
    </ligand>
</feature>
<feature type="binding site" evidence="3">
    <location>
        <position position="130"/>
    </location>
    <ligand>
        <name>Na(+)</name>
        <dbReference type="ChEBI" id="CHEBI:29101"/>
    </ligand>
</feature>
<feature type="binding site" evidence="3">
    <location>
        <position position="133"/>
    </location>
    <ligand>
        <name>Na(+)</name>
        <dbReference type="ChEBI" id="CHEBI:29101"/>
    </ligand>
</feature>
<feature type="binding site" evidence="3">
    <location>
        <position position="135"/>
    </location>
    <ligand>
        <name>Na(+)</name>
        <dbReference type="ChEBI" id="CHEBI:29101"/>
    </ligand>
</feature>
<feature type="binding site" evidence="3">
    <location>
        <position position="137"/>
    </location>
    <ligand>
        <name>Na(+)</name>
        <dbReference type="ChEBI" id="CHEBI:29101"/>
    </ligand>
</feature>
<feature type="binding site" evidence="1">
    <location>
        <position position="188"/>
    </location>
    <ligand>
        <name>NADP(+)</name>
        <dbReference type="ChEBI" id="CHEBI:58349"/>
    </ligand>
</feature>
<feature type="binding site" evidence="3">
    <location>
        <position position="191"/>
    </location>
    <ligand>
        <name>L-homoserine</name>
        <dbReference type="ChEBI" id="CHEBI:57476"/>
    </ligand>
</feature>
<feature type="binding site" evidence="1">
    <location>
        <position position="191"/>
    </location>
    <ligand>
        <name>NADP(+)</name>
        <dbReference type="ChEBI" id="CHEBI:58349"/>
    </ligand>
</feature>
<feature type="binding site" evidence="3">
    <location>
        <position position="202"/>
    </location>
    <ligand>
        <name>L-homoserine</name>
        <dbReference type="ChEBI" id="CHEBI:57476"/>
    </ligand>
</feature>
<feature type="binding site" evidence="3">
    <location>
        <position position="303"/>
    </location>
    <ligand>
        <name>NAD(+)</name>
        <dbReference type="ChEBI" id="CHEBI:57540"/>
    </ligand>
</feature>
<feature type="binding site" evidence="1">
    <location>
        <position position="303"/>
    </location>
    <ligand>
        <name>NADP(+)</name>
        <dbReference type="ChEBI" id="CHEBI:58349"/>
    </ligand>
</feature>
<feature type="binding site" evidence="2">
    <location>
        <position position="303"/>
    </location>
    <ligand>
        <name>NADPH</name>
        <dbReference type="ChEBI" id="CHEBI:57783"/>
    </ligand>
</feature>
<reference key="1">
    <citation type="journal article" date="2001" name="Genome Res.">
        <title>The complete genome sequence of the lactic acid bacterium Lactococcus lactis ssp. lactis IL1403.</title>
        <authorList>
            <person name="Bolotin A."/>
            <person name="Wincker P."/>
            <person name="Mauger S."/>
            <person name="Jaillon O."/>
            <person name="Malarme K."/>
            <person name="Weissenbach J."/>
            <person name="Ehrlich S.D."/>
            <person name="Sorokin A."/>
        </authorList>
    </citation>
    <scope>NUCLEOTIDE SEQUENCE [LARGE SCALE GENOMIC DNA]</scope>
    <source>
        <strain>IL1403</strain>
    </source>
</reference>
<name>DHOM_LACLA</name>
<protein>
    <recommendedName>
        <fullName>Homoserine dehydrogenase</fullName>
        <shortName>HDH</shortName>
        <shortName>HSD</shortName>
        <ecNumber evidence="3">1.1.1.3</ecNumber>
    </recommendedName>
</protein>
<gene>
    <name type="primary">hom</name>
    <name type="ordered locus">LL1159</name>
    <name type="ORF">L0090</name>
</gene>
<organism>
    <name type="scientific">Lactococcus lactis subsp. lactis (strain IL1403)</name>
    <name type="common">Streptococcus lactis</name>
    <dbReference type="NCBI Taxonomy" id="272623"/>
    <lineage>
        <taxon>Bacteria</taxon>
        <taxon>Bacillati</taxon>
        <taxon>Bacillota</taxon>
        <taxon>Bacilli</taxon>
        <taxon>Lactobacillales</taxon>
        <taxon>Streptococcaceae</taxon>
        <taxon>Lactococcus</taxon>
    </lineage>
</organism>
<comment type="function">
    <text evidence="3">Catalyzes the conversion of L-aspartate-beta-semialdehyde (L-Asa) to L-homoserine (L-Hse), the third step in the biosynthesis of threonine and methionine from aspartate.</text>
</comment>
<comment type="catalytic activity">
    <reaction evidence="3">
        <text>L-homoserine + NADP(+) = L-aspartate 4-semialdehyde + NADPH + H(+)</text>
        <dbReference type="Rhea" id="RHEA:15761"/>
        <dbReference type="ChEBI" id="CHEBI:15378"/>
        <dbReference type="ChEBI" id="CHEBI:57476"/>
        <dbReference type="ChEBI" id="CHEBI:57783"/>
        <dbReference type="ChEBI" id="CHEBI:58349"/>
        <dbReference type="ChEBI" id="CHEBI:537519"/>
        <dbReference type="EC" id="1.1.1.3"/>
    </reaction>
    <physiologicalReaction direction="right-to-left" evidence="3">
        <dbReference type="Rhea" id="RHEA:15763"/>
    </physiologicalReaction>
</comment>
<comment type="catalytic activity">
    <reaction evidence="3">
        <text>L-homoserine + NAD(+) = L-aspartate 4-semialdehyde + NADH + H(+)</text>
        <dbReference type="Rhea" id="RHEA:15757"/>
        <dbReference type="ChEBI" id="CHEBI:15378"/>
        <dbReference type="ChEBI" id="CHEBI:57476"/>
        <dbReference type="ChEBI" id="CHEBI:57540"/>
        <dbReference type="ChEBI" id="CHEBI:57945"/>
        <dbReference type="ChEBI" id="CHEBI:537519"/>
        <dbReference type="EC" id="1.1.1.3"/>
    </reaction>
    <physiologicalReaction direction="right-to-left" evidence="3">
        <dbReference type="Rhea" id="RHEA:15759"/>
    </physiologicalReaction>
</comment>
<comment type="cofactor">
    <cofactor evidence="3">
        <name>a metal cation</name>
        <dbReference type="ChEBI" id="CHEBI:25213"/>
    </cofactor>
    <text evidence="3">A sodium ion is seen in the structure; a metal ion may subtly affect the relative position of the nucleotide-binding region to influence enzyme activity, and could increase the stability of the enzyme.</text>
</comment>
<comment type="pathway">
    <text evidence="3">Amino-acid biosynthesis; L-methionine biosynthesis via de novo pathway; L-homoserine from L-aspartate: step 3/3.</text>
</comment>
<comment type="pathway">
    <text evidence="3">Amino-acid biosynthesis; L-threonine biosynthesis; L-threonine from L-aspartate: step 3/5.</text>
</comment>
<comment type="similarity">
    <text evidence="6">Belongs to the homoserine dehydrogenase family.</text>
</comment>
<proteinExistence type="inferred from homology"/>
<keyword id="KW-0028">Amino-acid biosynthesis</keyword>
<keyword id="KW-0479">Metal-binding</keyword>
<keyword id="KW-0486">Methionine biosynthesis</keyword>
<keyword id="KW-0520">NAD</keyword>
<keyword id="KW-0521">NADP</keyword>
<keyword id="KW-0560">Oxidoreductase</keyword>
<keyword id="KW-1185">Reference proteome</keyword>
<keyword id="KW-0915">Sodium</keyword>
<keyword id="KW-0791">Threonine biosynthesis</keyword>
<dbReference type="EC" id="1.1.1.3" evidence="3"/>
<dbReference type="EMBL" id="AE005176">
    <property type="protein sequence ID" value="AAK05257.1"/>
    <property type="molecule type" value="Genomic_DNA"/>
</dbReference>
<dbReference type="PIR" id="G86769">
    <property type="entry name" value="G86769"/>
</dbReference>
<dbReference type="RefSeq" id="NP_267315.1">
    <property type="nucleotide sequence ID" value="NC_002662.1"/>
</dbReference>
<dbReference type="RefSeq" id="WP_003132116.1">
    <property type="nucleotide sequence ID" value="NC_002662.1"/>
</dbReference>
<dbReference type="SMR" id="Q9CGD8"/>
<dbReference type="PaxDb" id="272623-L0090"/>
<dbReference type="EnsemblBacteria" id="AAK05257">
    <property type="protein sequence ID" value="AAK05257"/>
    <property type="gene ID" value="L0090"/>
</dbReference>
<dbReference type="KEGG" id="lla:L0090"/>
<dbReference type="PATRIC" id="fig|272623.7.peg.1239"/>
<dbReference type="eggNOG" id="COG0460">
    <property type="taxonomic scope" value="Bacteria"/>
</dbReference>
<dbReference type="HOGENOM" id="CLU_009116_1_0_9"/>
<dbReference type="OrthoDB" id="9808167at2"/>
<dbReference type="UniPathway" id="UPA00050">
    <property type="reaction ID" value="UER00063"/>
</dbReference>
<dbReference type="UniPathway" id="UPA00051">
    <property type="reaction ID" value="UER00465"/>
</dbReference>
<dbReference type="Proteomes" id="UP000002196">
    <property type="component" value="Chromosome"/>
</dbReference>
<dbReference type="GO" id="GO:0004412">
    <property type="term" value="F:homoserine dehydrogenase activity"/>
    <property type="evidence" value="ECO:0000250"/>
    <property type="project" value="UniProtKB"/>
</dbReference>
<dbReference type="GO" id="GO:0046872">
    <property type="term" value="F:metal ion binding"/>
    <property type="evidence" value="ECO:0007669"/>
    <property type="project" value="UniProtKB-KW"/>
</dbReference>
<dbReference type="GO" id="GO:0070403">
    <property type="term" value="F:NAD+ binding"/>
    <property type="evidence" value="ECO:0000250"/>
    <property type="project" value="UniProtKB"/>
</dbReference>
<dbReference type="GO" id="GO:0050661">
    <property type="term" value="F:NADP binding"/>
    <property type="evidence" value="ECO:0007669"/>
    <property type="project" value="InterPro"/>
</dbReference>
<dbReference type="GO" id="GO:0009086">
    <property type="term" value="P:methionine biosynthetic process"/>
    <property type="evidence" value="ECO:0000250"/>
    <property type="project" value="UniProtKB"/>
</dbReference>
<dbReference type="GO" id="GO:0009088">
    <property type="term" value="P:threonine biosynthetic process"/>
    <property type="evidence" value="ECO:0000250"/>
    <property type="project" value="UniProtKB"/>
</dbReference>
<dbReference type="FunFam" id="3.30.360.10:FF:000005">
    <property type="entry name" value="Homoserine dehydrogenase"/>
    <property type="match status" value="1"/>
</dbReference>
<dbReference type="Gene3D" id="3.30.70.260">
    <property type="match status" value="1"/>
</dbReference>
<dbReference type="Gene3D" id="3.30.360.10">
    <property type="entry name" value="Dihydrodipicolinate Reductase, domain 2"/>
    <property type="match status" value="1"/>
</dbReference>
<dbReference type="Gene3D" id="3.40.50.720">
    <property type="entry name" value="NAD(P)-binding Rossmann-like Domain"/>
    <property type="match status" value="1"/>
</dbReference>
<dbReference type="InterPro" id="IPR002912">
    <property type="entry name" value="ACT_dom"/>
</dbReference>
<dbReference type="InterPro" id="IPR005106">
    <property type="entry name" value="Asp/hSer_DH_NAD-bd"/>
</dbReference>
<dbReference type="InterPro" id="IPR016204">
    <property type="entry name" value="HDH"/>
</dbReference>
<dbReference type="InterPro" id="IPR001342">
    <property type="entry name" value="HDH_cat"/>
</dbReference>
<dbReference type="InterPro" id="IPR019811">
    <property type="entry name" value="HDH_CS"/>
</dbReference>
<dbReference type="InterPro" id="IPR036291">
    <property type="entry name" value="NAD(P)-bd_dom_sf"/>
</dbReference>
<dbReference type="NCBIfam" id="NF004976">
    <property type="entry name" value="PRK06349.1"/>
    <property type="match status" value="1"/>
</dbReference>
<dbReference type="PANTHER" id="PTHR43331">
    <property type="entry name" value="HOMOSERINE DEHYDROGENASE"/>
    <property type="match status" value="1"/>
</dbReference>
<dbReference type="PANTHER" id="PTHR43331:SF1">
    <property type="entry name" value="HOMOSERINE DEHYDROGENASE"/>
    <property type="match status" value="1"/>
</dbReference>
<dbReference type="Pfam" id="PF00742">
    <property type="entry name" value="Homoserine_dh"/>
    <property type="match status" value="1"/>
</dbReference>
<dbReference type="Pfam" id="PF03447">
    <property type="entry name" value="NAD_binding_3"/>
    <property type="match status" value="1"/>
</dbReference>
<dbReference type="PIRSF" id="PIRSF000098">
    <property type="entry name" value="Homoser_dehydrog"/>
    <property type="match status" value="1"/>
</dbReference>
<dbReference type="SUPFAM" id="SSF55347">
    <property type="entry name" value="Glyceraldehyde-3-phosphate dehydrogenase-like, C-terminal domain"/>
    <property type="match status" value="1"/>
</dbReference>
<dbReference type="SUPFAM" id="SSF51735">
    <property type="entry name" value="NAD(P)-binding Rossmann-fold domains"/>
    <property type="match status" value="1"/>
</dbReference>
<dbReference type="PROSITE" id="PS51671">
    <property type="entry name" value="ACT"/>
    <property type="match status" value="1"/>
</dbReference>
<dbReference type="PROSITE" id="PS01042">
    <property type="entry name" value="HOMOSER_DHGENASE"/>
    <property type="match status" value="1"/>
</dbReference>
<sequence>MTVNIAILGFGTVGTGLPTLISENKEKLSKILDEEIVISKVLMRDEKAIEKARAQGYQYDFVLTLEEILADSEISIVVELMGRIEPAKTYITKVIKAGKNVVTANKDLLAVHGTELRALAEKHHVALYYEAAVAGGIPILRTLANSFSSDKITHLLGILNGTSNFMMTKMSEEAWTYDQSLAKAQELGYAESDPTNDVDGIDASYKLAILSEFAFGMTLSPDQISKSGLRTIQKTDVEIAQQFGYVLKLTGEINEVESGIFAEVSPTFLPKSHPLASVNGVMNAVFIESDGIGDSMFYGAGAGQKPTATSVLADIVRIVKREKDGTIGKSFNEYARPTSLANPHDIVNKYYFSVETPDSTGQLLRLVELFTSEDVSFEQVLQQKGDGHRAVVVIISHQINRVQLLAIQDKLKEEVDFKLLNYFKVLGD</sequence>
<accession>Q9CGD8</accession>